<dbReference type="EMBL" id="CP000647">
    <property type="protein sequence ID" value="ABR79078.1"/>
    <property type="molecule type" value="Genomic_DNA"/>
</dbReference>
<dbReference type="RefSeq" id="WP_004145325.1">
    <property type="nucleotide sequence ID" value="NC_009648.1"/>
</dbReference>
<dbReference type="SMR" id="A6TEU4"/>
<dbReference type="STRING" id="272620.KPN_03691"/>
<dbReference type="jPOST" id="A6TEU4"/>
<dbReference type="PaxDb" id="272620-KPN_03691"/>
<dbReference type="EnsemblBacteria" id="ABR79078">
    <property type="protein sequence ID" value="ABR79078"/>
    <property type="gene ID" value="KPN_03691"/>
</dbReference>
<dbReference type="GeneID" id="93271000"/>
<dbReference type="KEGG" id="kpn:KPN_03691"/>
<dbReference type="HOGENOM" id="CLU_095787_0_0_6"/>
<dbReference type="Proteomes" id="UP000000265">
    <property type="component" value="Chromosome"/>
</dbReference>
<dbReference type="GO" id="GO:0005886">
    <property type="term" value="C:plasma membrane"/>
    <property type="evidence" value="ECO:0007669"/>
    <property type="project" value="UniProtKB-SubCell"/>
</dbReference>
<dbReference type="GO" id="GO:0008381">
    <property type="term" value="F:mechanosensitive monoatomic ion channel activity"/>
    <property type="evidence" value="ECO:0007669"/>
    <property type="project" value="UniProtKB-UniRule"/>
</dbReference>
<dbReference type="FunFam" id="1.10.1200.120:FF:000001">
    <property type="entry name" value="Large-conductance mechanosensitive channel"/>
    <property type="match status" value="1"/>
</dbReference>
<dbReference type="Gene3D" id="1.10.1200.120">
    <property type="entry name" value="Large-conductance mechanosensitive channel, MscL, domain 1"/>
    <property type="match status" value="1"/>
</dbReference>
<dbReference type="HAMAP" id="MF_00115">
    <property type="entry name" value="MscL"/>
    <property type="match status" value="1"/>
</dbReference>
<dbReference type="InterPro" id="IPR019823">
    <property type="entry name" value="Mechanosensitive_channel_CS"/>
</dbReference>
<dbReference type="InterPro" id="IPR001185">
    <property type="entry name" value="MS_channel"/>
</dbReference>
<dbReference type="InterPro" id="IPR037673">
    <property type="entry name" value="MSC/AndL"/>
</dbReference>
<dbReference type="InterPro" id="IPR036019">
    <property type="entry name" value="MscL_channel"/>
</dbReference>
<dbReference type="NCBIfam" id="TIGR00220">
    <property type="entry name" value="mscL"/>
    <property type="match status" value="1"/>
</dbReference>
<dbReference type="NCBIfam" id="NF001841">
    <property type="entry name" value="PRK00567.1-1"/>
    <property type="match status" value="1"/>
</dbReference>
<dbReference type="NCBIfam" id="NF001843">
    <property type="entry name" value="PRK00567.1-4"/>
    <property type="match status" value="1"/>
</dbReference>
<dbReference type="PANTHER" id="PTHR30266:SF2">
    <property type="entry name" value="LARGE-CONDUCTANCE MECHANOSENSITIVE CHANNEL"/>
    <property type="match status" value="1"/>
</dbReference>
<dbReference type="PANTHER" id="PTHR30266">
    <property type="entry name" value="MECHANOSENSITIVE CHANNEL MSCL"/>
    <property type="match status" value="1"/>
</dbReference>
<dbReference type="Pfam" id="PF01741">
    <property type="entry name" value="MscL"/>
    <property type="match status" value="1"/>
</dbReference>
<dbReference type="PRINTS" id="PR01264">
    <property type="entry name" value="MECHCHANNEL"/>
</dbReference>
<dbReference type="SUPFAM" id="SSF81330">
    <property type="entry name" value="Gated mechanosensitive channel"/>
    <property type="match status" value="1"/>
</dbReference>
<dbReference type="PROSITE" id="PS01327">
    <property type="entry name" value="MSCL"/>
    <property type="match status" value="1"/>
</dbReference>
<accession>A6TEU4</accession>
<name>MSCL_KLEP7</name>
<gene>
    <name evidence="1" type="primary">mscL</name>
    <name type="ordered locus">KPN78578_36540</name>
    <name type="ORF">KPN_03691</name>
</gene>
<protein>
    <recommendedName>
        <fullName evidence="1">Large-conductance mechanosensitive channel</fullName>
    </recommendedName>
</protein>
<reference key="1">
    <citation type="submission" date="2006-09" db="EMBL/GenBank/DDBJ databases">
        <authorList>
            <consortium name="The Klebsiella pneumonia Genome Sequencing Project"/>
            <person name="McClelland M."/>
            <person name="Sanderson E.K."/>
            <person name="Spieth J."/>
            <person name="Clifton W.S."/>
            <person name="Latreille P."/>
            <person name="Sabo A."/>
            <person name="Pepin K."/>
            <person name="Bhonagiri V."/>
            <person name="Porwollik S."/>
            <person name="Ali J."/>
            <person name="Wilson R.K."/>
        </authorList>
    </citation>
    <scope>NUCLEOTIDE SEQUENCE [LARGE SCALE GENOMIC DNA]</scope>
    <source>
        <strain>ATCC 700721 / MGH 78578</strain>
    </source>
</reference>
<comment type="function">
    <text evidence="1">Channel that opens in response to stretch forces in the membrane lipid bilayer. May participate in the regulation of osmotic pressure changes within the cell.</text>
</comment>
<comment type="subunit">
    <text evidence="1">Homopentamer.</text>
</comment>
<comment type="subcellular location">
    <subcellularLocation>
        <location evidence="1">Cell inner membrane</location>
        <topology evidence="1">Multi-pass membrane protein</topology>
    </subcellularLocation>
</comment>
<comment type="similarity">
    <text evidence="1">Belongs to the MscL family.</text>
</comment>
<feature type="chain" id="PRO_1000015387" description="Large-conductance mechanosensitive channel">
    <location>
        <begin position="1"/>
        <end position="137"/>
    </location>
</feature>
<feature type="transmembrane region" description="Helical" evidence="1">
    <location>
        <begin position="10"/>
        <end position="30"/>
    </location>
</feature>
<feature type="transmembrane region" description="Helical" evidence="1">
    <location>
        <begin position="76"/>
        <end position="96"/>
    </location>
</feature>
<keyword id="KW-0997">Cell inner membrane</keyword>
<keyword id="KW-1003">Cell membrane</keyword>
<keyword id="KW-0407">Ion channel</keyword>
<keyword id="KW-0406">Ion transport</keyword>
<keyword id="KW-0472">Membrane</keyword>
<keyword id="KW-0812">Transmembrane</keyword>
<keyword id="KW-1133">Transmembrane helix</keyword>
<keyword id="KW-0813">Transport</keyword>
<proteinExistence type="inferred from homology"/>
<sequence>MSFLKEFREFAMRGNVVDLAVGVIIGAAFGKIVSSLVADIIMPPLGLLIGGIDFKQFAVTLRDAQGDVPAVVMHYGVFIQNVFDFIIVAFAIFMAIKLMNKLNRKKEEAPAAPPAPSKEEVLLSEIRDLLKEQNNRS</sequence>
<organism>
    <name type="scientific">Klebsiella pneumoniae subsp. pneumoniae (strain ATCC 700721 / MGH 78578)</name>
    <dbReference type="NCBI Taxonomy" id="272620"/>
    <lineage>
        <taxon>Bacteria</taxon>
        <taxon>Pseudomonadati</taxon>
        <taxon>Pseudomonadota</taxon>
        <taxon>Gammaproteobacteria</taxon>
        <taxon>Enterobacterales</taxon>
        <taxon>Enterobacteriaceae</taxon>
        <taxon>Klebsiella/Raoultella group</taxon>
        <taxon>Klebsiella</taxon>
        <taxon>Klebsiella pneumoniae complex</taxon>
    </lineage>
</organism>
<evidence type="ECO:0000255" key="1">
    <source>
        <dbReference type="HAMAP-Rule" id="MF_00115"/>
    </source>
</evidence>